<feature type="chain" id="PRO_1000073678" description="Ubiquinone/menaquinone biosynthesis C-methyltransferase UbiE">
    <location>
        <begin position="1"/>
        <end position="260"/>
    </location>
</feature>
<feature type="binding site" evidence="1">
    <location>
        <position position="83"/>
    </location>
    <ligand>
        <name>S-adenosyl-L-methionine</name>
        <dbReference type="ChEBI" id="CHEBI:59789"/>
    </ligand>
</feature>
<feature type="binding site" evidence="1">
    <location>
        <position position="104"/>
    </location>
    <ligand>
        <name>S-adenosyl-L-methionine</name>
        <dbReference type="ChEBI" id="CHEBI:59789"/>
    </ligand>
</feature>
<feature type="binding site" evidence="1">
    <location>
        <begin position="132"/>
        <end position="133"/>
    </location>
    <ligand>
        <name>S-adenosyl-L-methionine</name>
        <dbReference type="ChEBI" id="CHEBI:59789"/>
    </ligand>
</feature>
<feature type="binding site" evidence="1">
    <location>
        <position position="149"/>
    </location>
    <ligand>
        <name>S-adenosyl-L-methionine</name>
        <dbReference type="ChEBI" id="CHEBI:59789"/>
    </ligand>
</feature>
<comment type="function">
    <text evidence="1">Methyltransferase required for the conversion of demethylmenaquinol (DMKH2) to menaquinol (MKH2) and the conversion of 2-polyprenyl-6-methoxy-1,4-benzoquinol (DDMQH2) to 2-polyprenyl-3-methyl-6-methoxy-1,4-benzoquinol (DMQH2).</text>
</comment>
<comment type="catalytic activity">
    <reaction evidence="1">
        <text>a 2-demethylmenaquinol + S-adenosyl-L-methionine = a menaquinol + S-adenosyl-L-homocysteine + H(+)</text>
        <dbReference type="Rhea" id="RHEA:42640"/>
        <dbReference type="Rhea" id="RHEA-COMP:9539"/>
        <dbReference type="Rhea" id="RHEA-COMP:9563"/>
        <dbReference type="ChEBI" id="CHEBI:15378"/>
        <dbReference type="ChEBI" id="CHEBI:18151"/>
        <dbReference type="ChEBI" id="CHEBI:55437"/>
        <dbReference type="ChEBI" id="CHEBI:57856"/>
        <dbReference type="ChEBI" id="CHEBI:59789"/>
        <dbReference type="EC" id="2.1.1.163"/>
    </reaction>
</comment>
<comment type="catalytic activity">
    <reaction evidence="1">
        <text>a 2-methoxy-6-(all-trans-polyprenyl)benzene-1,4-diol + S-adenosyl-L-methionine = a 5-methoxy-2-methyl-3-(all-trans-polyprenyl)benzene-1,4-diol + S-adenosyl-L-homocysteine + H(+)</text>
        <dbReference type="Rhea" id="RHEA:28286"/>
        <dbReference type="Rhea" id="RHEA-COMP:10858"/>
        <dbReference type="Rhea" id="RHEA-COMP:10859"/>
        <dbReference type="ChEBI" id="CHEBI:15378"/>
        <dbReference type="ChEBI" id="CHEBI:57856"/>
        <dbReference type="ChEBI" id="CHEBI:59789"/>
        <dbReference type="ChEBI" id="CHEBI:84166"/>
        <dbReference type="ChEBI" id="CHEBI:84167"/>
        <dbReference type="EC" id="2.1.1.201"/>
    </reaction>
</comment>
<comment type="pathway">
    <text evidence="1">Quinol/quinone metabolism; menaquinone biosynthesis; menaquinol from 1,4-dihydroxy-2-naphthoate: step 2/2.</text>
</comment>
<comment type="pathway">
    <text evidence="1">Cofactor biosynthesis; ubiquinone biosynthesis.</text>
</comment>
<comment type="similarity">
    <text evidence="1">Belongs to the class I-like SAM-binding methyltransferase superfamily. MenG/UbiE family.</text>
</comment>
<organism>
    <name type="scientific">Vibrio cholerae serotype O1 (strain ATCC 39541 / Classical Ogawa 395 / O395)</name>
    <dbReference type="NCBI Taxonomy" id="345073"/>
    <lineage>
        <taxon>Bacteria</taxon>
        <taxon>Pseudomonadati</taxon>
        <taxon>Pseudomonadota</taxon>
        <taxon>Gammaproteobacteria</taxon>
        <taxon>Vibrionales</taxon>
        <taxon>Vibrionaceae</taxon>
        <taxon>Vibrio</taxon>
    </lineage>
</organism>
<protein>
    <recommendedName>
        <fullName evidence="1">Ubiquinone/menaquinone biosynthesis C-methyltransferase UbiE</fullName>
        <ecNumber evidence="1">2.1.1.163</ecNumber>
        <ecNumber evidence="1">2.1.1.201</ecNumber>
    </recommendedName>
    <alternativeName>
        <fullName evidence="1">2-methoxy-6-polyprenyl-1,4-benzoquinol methylase</fullName>
    </alternativeName>
    <alternativeName>
        <fullName evidence="1">Demethylmenaquinone methyltransferase</fullName>
    </alternativeName>
</protein>
<accession>A5F4E5</accession>
<accession>C3M2G1</accession>
<keyword id="KW-0474">Menaquinone biosynthesis</keyword>
<keyword id="KW-0489">Methyltransferase</keyword>
<keyword id="KW-0949">S-adenosyl-L-methionine</keyword>
<keyword id="KW-0808">Transferase</keyword>
<keyword id="KW-0831">Ubiquinone biosynthesis</keyword>
<evidence type="ECO:0000255" key="1">
    <source>
        <dbReference type="HAMAP-Rule" id="MF_01813"/>
    </source>
</evidence>
<proteinExistence type="inferred from homology"/>
<dbReference type="EC" id="2.1.1.163" evidence="1"/>
<dbReference type="EC" id="2.1.1.201" evidence="1"/>
<dbReference type="EMBL" id="CP000627">
    <property type="protein sequence ID" value="ABQ22037.1"/>
    <property type="molecule type" value="Genomic_DNA"/>
</dbReference>
<dbReference type="EMBL" id="CP001235">
    <property type="protein sequence ID" value="ACP08125.1"/>
    <property type="molecule type" value="Genomic_DNA"/>
</dbReference>
<dbReference type="RefSeq" id="WP_000132703.1">
    <property type="nucleotide sequence ID" value="NZ_JAACZH010000014.1"/>
</dbReference>
<dbReference type="SMR" id="A5F4E5"/>
<dbReference type="GeneID" id="89513178"/>
<dbReference type="KEGG" id="vco:VC0395_A2432"/>
<dbReference type="KEGG" id="vcr:VC395_0097"/>
<dbReference type="PATRIC" id="fig|345073.21.peg.89"/>
<dbReference type="eggNOG" id="COG2226">
    <property type="taxonomic scope" value="Bacteria"/>
</dbReference>
<dbReference type="HOGENOM" id="CLU_037990_0_0_6"/>
<dbReference type="OrthoDB" id="9808140at2"/>
<dbReference type="UniPathway" id="UPA00079">
    <property type="reaction ID" value="UER00169"/>
</dbReference>
<dbReference type="UniPathway" id="UPA00232"/>
<dbReference type="Proteomes" id="UP000000249">
    <property type="component" value="Chromosome 2"/>
</dbReference>
<dbReference type="GO" id="GO:0008425">
    <property type="term" value="F:2-methoxy-6-polyprenyl-1,4-benzoquinol methyltransferase activity"/>
    <property type="evidence" value="ECO:0007669"/>
    <property type="project" value="UniProtKB-UniRule"/>
</dbReference>
<dbReference type="GO" id="GO:0043770">
    <property type="term" value="F:demethylmenaquinone methyltransferase activity"/>
    <property type="evidence" value="ECO:0007669"/>
    <property type="project" value="UniProtKB-UniRule"/>
</dbReference>
<dbReference type="GO" id="GO:0009060">
    <property type="term" value="P:aerobic respiration"/>
    <property type="evidence" value="ECO:0007669"/>
    <property type="project" value="UniProtKB-UniRule"/>
</dbReference>
<dbReference type="GO" id="GO:0009234">
    <property type="term" value="P:menaquinone biosynthetic process"/>
    <property type="evidence" value="ECO:0007669"/>
    <property type="project" value="UniProtKB-UniRule"/>
</dbReference>
<dbReference type="GO" id="GO:0032259">
    <property type="term" value="P:methylation"/>
    <property type="evidence" value="ECO:0007669"/>
    <property type="project" value="UniProtKB-KW"/>
</dbReference>
<dbReference type="CDD" id="cd02440">
    <property type="entry name" value="AdoMet_MTases"/>
    <property type="match status" value="1"/>
</dbReference>
<dbReference type="FunFam" id="3.40.50.150:FF:000014">
    <property type="entry name" value="Ubiquinone/menaquinone biosynthesis C-methyltransferase UbiE"/>
    <property type="match status" value="1"/>
</dbReference>
<dbReference type="Gene3D" id="3.40.50.150">
    <property type="entry name" value="Vaccinia Virus protein VP39"/>
    <property type="match status" value="1"/>
</dbReference>
<dbReference type="HAMAP" id="MF_01813">
    <property type="entry name" value="MenG_UbiE_methyltr"/>
    <property type="match status" value="1"/>
</dbReference>
<dbReference type="InterPro" id="IPR029063">
    <property type="entry name" value="SAM-dependent_MTases_sf"/>
</dbReference>
<dbReference type="InterPro" id="IPR004033">
    <property type="entry name" value="UbiE/COQ5_MeTrFase"/>
</dbReference>
<dbReference type="InterPro" id="IPR023576">
    <property type="entry name" value="UbiE/COQ5_MeTrFase_CS"/>
</dbReference>
<dbReference type="NCBIfam" id="TIGR01934">
    <property type="entry name" value="MenG_MenH_UbiE"/>
    <property type="match status" value="1"/>
</dbReference>
<dbReference type="NCBIfam" id="NF001240">
    <property type="entry name" value="PRK00216.1-1"/>
    <property type="match status" value="1"/>
</dbReference>
<dbReference type="NCBIfam" id="NF001244">
    <property type="entry name" value="PRK00216.1-5"/>
    <property type="match status" value="1"/>
</dbReference>
<dbReference type="PANTHER" id="PTHR43591:SF24">
    <property type="entry name" value="2-METHOXY-6-POLYPRENYL-1,4-BENZOQUINOL METHYLASE, MITOCHONDRIAL"/>
    <property type="match status" value="1"/>
</dbReference>
<dbReference type="PANTHER" id="PTHR43591">
    <property type="entry name" value="METHYLTRANSFERASE"/>
    <property type="match status" value="1"/>
</dbReference>
<dbReference type="Pfam" id="PF01209">
    <property type="entry name" value="Ubie_methyltran"/>
    <property type="match status" value="1"/>
</dbReference>
<dbReference type="SUPFAM" id="SSF53335">
    <property type="entry name" value="S-adenosyl-L-methionine-dependent methyltransferases"/>
    <property type="match status" value="1"/>
</dbReference>
<dbReference type="PROSITE" id="PS51608">
    <property type="entry name" value="SAM_MT_UBIE"/>
    <property type="match status" value="1"/>
</dbReference>
<dbReference type="PROSITE" id="PS01183">
    <property type="entry name" value="UBIE_1"/>
    <property type="match status" value="1"/>
</dbReference>
<dbReference type="PROSITE" id="PS01184">
    <property type="entry name" value="UBIE_2"/>
    <property type="match status" value="1"/>
</dbReference>
<gene>
    <name evidence="1" type="primary">ubiE</name>
    <name type="ordered locus">VC0395_A2432</name>
    <name type="ordered locus">VC395_0097</name>
</gene>
<sequence length="260" mass="29217">MTDTNVLANSATDNQETTHFGFETVRKDEKVHKVAQVFHSVAAKYDIMNDLMSGGIHRLWKRFTIDCSGARPGQRILDLGGGTGDLTAKFSRIVGEKGHVILADINNSMLNVGRDKLRDSGVVGNVHYVQANAEELPFPDNYFDCITISFCLRNVTDKDKALRSMFRVLKPGGRLLVLEFSKPILEPLSKLYDTYSFHILPKMGQLIANDADSYRYLAESIRMHPDQETLKGMMEEAGFEQTTYYNLTGGIVALHRGYKF</sequence>
<name>UBIE_VIBC3</name>
<reference key="1">
    <citation type="submission" date="2007-03" db="EMBL/GenBank/DDBJ databases">
        <authorList>
            <person name="Heidelberg J."/>
        </authorList>
    </citation>
    <scope>NUCLEOTIDE SEQUENCE [LARGE SCALE GENOMIC DNA]</scope>
    <source>
        <strain>ATCC 39541 / Classical Ogawa 395 / O395</strain>
    </source>
</reference>
<reference key="2">
    <citation type="journal article" date="2008" name="PLoS ONE">
        <title>A recalibrated molecular clock and independent origins for the cholera pandemic clones.</title>
        <authorList>
            <person name="Feng L."/>
            <person name="Reeves P.R."/>
            <person name="Lan R."/>
            <person name="Ren Y."/>
            <person name="Gao C."/>
            <person name="Zhou Z."/>
            <person name="Ren Y."/>
            <person name="Cheng J."/>
            <person name="Wang W."/>
            <person name="Wang J."/>
            <person name="Qian W."/>
            <person name="Li D."/>
            <person name="Wang L."/>
        </authorList>
    </citation>
    <scope>NUCLEOTIDE SEQUENCE [LARGE SCALE GENOMIC DNA]</scope>
    <source>
        <strain>ATCC 39541 / Classical Ogawa 395 / O395</strain>
    </source>
</reference>